<proteinExistence type="inferred from homology"/>
<comment type="function">
    <text evidence="1">Converts the preformed base xanthine, a product of nucleic acid breakdown, to xanthosine 5'-monophosphate (XMP), so it can be reused for RNA or DNA synthesis.</text>
</comment>
<comment type="catalytic activity">
    <reaction evidence="1">
        <text>XMP + diphosphate = xanthine + 5-phospho-alpha-D-ribose 1-diphosphate</text>
        <dbReference type="Rhea" id="RHEA:10800"/>
        <dbReference type="ChEBI" id="CHEBI:17712"/>
        <dbReference type="ChEBI" id="CHEBI:33019"/>
        <dbReference type="ChEBI" id="CHEBI:57464"/>
        <dbReference type="ChEBI" id="CHEBI:58017"/>
        <dbReference type="EC" id="2.4.2.22"/>
    </reaction>
</comment>
<comment type="pathway">
    <text evidence="1">Purine metabolism; XMP biosynthesis via salvage pathway; XMP from xanthine: step 1/1.</text>
</comment>
<comment type="subunit">
    <text evidence="1">Homodimer.</text>
</comment>
<comment type="subcellular location">
    <subcellularLocation>
        <location evidence="1">Cytoplasm</location>
    </subcellularLocation>
</comment>
<comment type="similarity">
    <text evidence="1">Belongs to the purine/pyrimidine phosphoribosyltransferase family. Xpt subfamily.</text>
</comment>
<gene>
    <name evidence="1" type="primary">xpt</name>
    <name type="ordered locus">Lreu_1447</name>
</gene>
<evidence type="ECO:0000255" key="1">
    <source>
        <dbReference type="HAMAP-Rule" id="MF_01184"/>
    </source>
</evidence>
<organism>
    <name type="scientific">Limosilactobacillus reuteri (strain DSM 20016)</name>
    <name type="common">Lactobacillus reuteri</name>
    <dbReference type="NCBI Taxonomy" id="557436"/>
    <lineage>
        <taxon>Bacteria</taxon>
        <taxon>Bacillati</taxon>
        <taxon>Bacillota</taxon>
        <taxon>Bacilli</taxon>
        <taxon>Lactobacillales</taxon>
        <taxon>Lactobacillaceae</taxon>
        <taxon>Limosilactobacillus</taxon>
    </lineage>
</organism>
<protein>
    <recommendedName>
        <fullName evidence="1">Xanthine phosphoribosyltransferase</fullName>
        <shortName evidence="1">XPRTase</shortName>
        <ecNumber evidence="1">2.4.2.22</ecNumber>
    </recommendedName>
</protein>
<name>XPT_LIMRD</name>
<reference key="1">
    <citation type="journal article" date="2011" name="PLoS Genet.">
        <title>The evolution of host specialization in the vertebrate gut symbiont Lactobacillus reuteri.</title>
        <authorList>
            <person name="Frese S.A."/>
            <person name="Benson A.K."/>
            <person name="Tannock G.W."/>
            <person name="Loach D.M."/>
            <person name="Kim J."/>
            <person name="Zhang M."/>
            <person name="Oh P.L."/>
            <person name="Heng N.C."/>
            <person name="Patil P.B."/>
            <person name="Juge N."/>
            <person name="Mackenzie D.A."/>
            <person name="Pearson B.M."/>
            <person name="Lapidus A."/>
            <person name="Dalin E."/>
            <person name="Tice H."/>
            <person name="Goltsman E."/>
            <person name="Land M."/>
            <person name="Hauser L."/>
            <person name="Ivanova N."/>
            <person name="Kyrpides N.C."/>
            <person name="Walter J."/>
        </authorList>
    </citation>
    <scope>NUCLEOTIDE SEQUENCE [LARGE SCALE GENOMIC DNA]</scope>
    <source>
        <strain>DSM 20016</strain>
    </source>
</reference>
<accession>A5VLG9</accession>
<dbReference type="EC" id="2.4.2.22" evidence="1"/>
<dbReference type="EMBL" id="CP000705">
    <property type="protein sequence ID" value="ABQ83693.1"/>
    <property type="molecule type" value="Genomic_DNA"/>
</dbReference>
<dbReference type="RefSeq" id="WP_003668766.1">
    <property type="nucleotide sequence ID" value="NC_009513.1"/>
</dbReference>
<dbReference type="SMR" id="A5VLG9"/>
<dbReference type="STRING" id="557436.Lreu_1447"/>
<dbReference type="GeneID" id="77191443"/>
<dbReference type="KEGG" id="lre:Lreu_1447"/>
<dbReference type="PATRIC" id="fig|557436.17.peg.176"/>
<dbReference type="eggNOG" id="COG0503">
    <property type="taxonomic scope" value="Bacteria"/>
</dbReference>
<dbReference type="HOGENOM" id="CLU_099015_0_0_9"/>
<dbReference type="UniPathway" id="UPA00602">
    <property type="reaction ID" value="UER00658"/>
</dbReference>
<dbReference type="Proteomes" id="UP000001991">
    <property type="component" value="Chromosome"/>
</dbReference>
<dbReference type="GO" id="GO:0005737">
    <property type="term" value="C:cytoplasm"/>
    <property type="evidence" value="ECO:0007669"/>
    <property type="project" value="UniProtKB-SubCell"/>
</dbReference>
<dbReference type="GO" id="GO:0000310">
    <property type="term" value="F:xanthine phosphoribosyltransferase activity"/>
    <property type="evidence" value="ECO:0007669"/>
    <property type="project" value="UniProtKB-UniRule"/>
</dbReference>
<dbReference type="GO" id="GO:0006166">
    <property type="term" value="P:purine ribonucleoside salvage"/>
    <property type="evidence" value="ECO:0007669"/>
    <property type="project" value="UniProtKB-KW"/>
</dbReference>
<dbReference type="GO" id="GO:0046110">
    <property type="term" value="P:xanthine metabolic process"/>
    <property type="evidence" value="ECO:0007669"/>
    <property type="project" value="InterPro"/>
</dbReference>
<dbReference type="GO" id="GO:0032265">
    <property type="term" value="P:XMP salvage"/>
    <property type="evidence" value="ECO:0007669"/>
    <property type="project" value="UniProtKB-UniRule"/>
</dbReference>
<dbReference type="CDD" id="cd06223">
    <property type="entry name" value="PRTases_typeI"/>
    <property type="match status" value="1"/>
</dbReference>
<dbReference type="Gene3D" id="3.40.50.2020">
    <property type="match status" value="1"/>
</dbReference>
<dbReference type="HAMAP" id="MF_01184">
    <property type="entry name" value="XPRTase"/>
    <property type="match status" value="1"/>
</dbReference>
<dbReference type="InterPro" id="IPR000836">
    <property type="entry name" value="PRibTrfase_dom"/>
</dbReference>
<dbReference type="InterPro" id="IPR029057">
    <property type="entry name" value="PRTase-like"/>
</dbReference>
<dbReference type="InterPro" id="IPR050118">
    <property type="entry name" value="Pur/Pyrimidine_PRTase"/>
</dbReference>
<dbReference type="InterPro" id="IPR010079">
    <property type="entry name" value="Xanthine_PRibTrfase"/>
</dbReference>
<dbReference type="NCBIfam" id="NF006671">
    <property type="entry name" value="PRK09219.1"/>
    <property type="match status" value="1"/>
</dbReference>
<dbReference type="NCBIfam" id="TIGR01744">
    <property type="entry name" value="XPRTase"/>
    <property type="match status" value="1"/>
</dbReference>
<dbReference type="PANTHER" id="PTHR43864">
    <property type="entry name" value="HYPOXANTHINE/GUANINE PHOSPHORIBOSYLTRANSFERASE"/>
    <property type="match status" value="1"/>
</dbReference>
<dbReference type="PANTHER" id="PTHR43864:SF1">
    <property type="entry name" value="XANTHINE PHOSPHORIBOSYLTRANSFERASE"/>
    <property type="match status" value="1"/>
</dbReference>
<dbReference type="SUPFAM" id="SSF53271">
    <property type="entry name" value="PRTase-like"/>
    <property type="match status" value="1"/>
</dbReference>
<keyword id="KW-0963">Cytoplasm</keyword>
<keyword id="KW-0328">Glycosyltransferase</keyword>
<keyword id="KW-0660">Purine salvage</keyword>
<keyword id="KW-1185">Reference proteome</keyword>
<keyword id="KW-0808">Transferase</keyword>
<feature type="chain" id="PRO_0000339710" description="Xanthine phosphoribosyltransferase">
    <location>
        <begin position="1"/>
        <end position="191"/>
    </location>
</feature>
<feature type="binding site" evidence="1">
    <location>
        <position position="20"/>
    </location>
    <ligand>
        <name>xanthine</name>
        <dbReference type="ChEBI" id="CHEBI:17712"/>
    </ligand>
</feature>
<feature type="binding site" evidence="1">
    <location>
        <position position="27"/>
    </location>
    <ligand>
        <name>xanthine</name>
        <dbReference type="ChEBI" id="CHEBI:17712"/>
    </ligand>
</feature>
<feature type="binding site" evidence="1">
    <location>
        <begin position="128"/>
        <end position="132"/>
    </location>
    <ligand>
        <name>5-phospho-alpha-D-ribose 1-diphosphate</name>
        <dbReference type="ChEBI" id="CHEBI:58017"/>
    </ligand>
</feature>
<feature type="binding site" evidence="1">
    <location>
        <position position="156"/>
    </location>
    <ligand>
        <name>xanthine</name>
        <dbReference type="ChEBI" id="CHEBI:17712"/>
    </ligand>
</feature>
<sequence>MKELEEKIKEYGTVLPGNVLKVDAFLNHQVDPQLMLHIGQKFAKLFANEGITKIWTVESSGIAPAVMTGLEMNLPVIFARKHKSLTLNQNMYTADVYSYTKKTTNRISISKKYVDADDKILMIDDFLANGQAVEGLLEIADQAGVQVAGAGIVIEKSFQPGAGELKERGIRVESLARIQSLSDNKVEFVKD</sequence>